<organism>
    <name type="scientific">Homo sapiens</name>
    <name type="common">Human</name>
    <dbReference type="NCBI Taxonomy" id="9606"/>
    <lineage>
        <taxon>Eukaryota</taxon>
        <taxon>Metazoa</taxon>
        <taxon>Chordata</taxon>
        <taxon>Craniata</taxon>
        <taxon>Vertebrata</taxon>
        <taxon>Euteleostomi</taxon>
        <taxon>Mammalia</taxon>
        <taxon>Eutheria</taxon>
        <taxon>Euarchontoglires</taxon>
        <taxon>Primates</taxon>
        <taxon>Haplorrhini</taxon>
        <taxon>Catarrhini</taxon>
        <taxon>Hominidae</taxon>
        <taxon>Homo</taxon>
    </lineage>
</organism>
<keyword id="KW-0025">Alternative splicing</keyword>
<keyword id="KW-1003">Cell membrane</keyword>
<keyword id="KW-0963">Cytoplasm</keyword>
<keyword id="KW-0206">Cytoskeleton</keyword>
<keyword id="KW-0472">Membrane</keyword>
<keyword id="KW-0597">Phosphoprotein</keyword>
<keyword id="KW-1267">Proteomics identification</keyword>
<keyword id="KW-1185">Reference proteome</keyword>
<gene>
    <name type="primary">CTNNAL1</name>
</gene>
<evidence type="ECO:0000250" key="1">
    <source>
        <dbReference type="UniProtKB" id="O88327"/>
    </source>
</evidence>
<evidence type="ECO:0000269" key="2">
    <source>
    </source>
</evidence>
<evidence type="ECO:0000269" key="3">
    <source>
    </source>
</evidence>
<evidence type="ECO:0000269" key="4">
    <source>
    </source>
</evidence>
<evidence type="ECO:0000269" key="5">
    <source>
    </source>
</evidence>
<evidence type="ECO:0000269" key="6">
    <source ref="6"/>
</evidence>
<evidence type="ECO:0000303" key="7">
    <source>
    </source>
</evidence>
<evidence type="ECO:0000303" key="8">
    <source>
    </source>
</evidence>
<evidence type="ECO:0000305" key="9"/>
<evidence type="ECO:0007744" key="10">
    <source>
    </source>
</evidence>
<evidence type="ECO:0007744" key="11">
    <source>
    </source>
</evidence>
<protein>
    <recommendedName>
        <fullName>Alpha-catulin</fullName>
    </recommendedName>
    <alternativeName>
        <fullName>Alpha-catenin-related protein</fullName>
        <shortName>ACRP</shortName>
    </alternativeName>
    <alternativeName>
        <fullName>Catenin alpha-like protein 1</fullName>
    </alternativeName>
</protein>
<proteinExistence type="evidence at protein level"/>
<sequence length="734" mass="81896">MAASPGPAGVGGAGAVYGSGSSGFALDSGLEIKTRSVEQTLLPLVSQITTLINHKDNTKKSDKTLQAIQRVGQAVNLAVGRFVKVGEAIANENWDLKEEINIACIEAKQAGETIAALTDITNLNHLESDGQITIFTDKTGVIKAARLLLSSVTKVLLLADRVVIKQIITSRNKVLATMERLEKVNSFQEFVQIFSQFGNEMVEFAHLSGDRQNDLKDEKKKAKMAAARAVLEKCTMMLLTASKTCLRHPNCESAHKNKEGVFDRMKVALDKVIEIVTDCKPNGETDISSISIFTGIKEFKMNIEALRENLYFQSKENLSVTLEVILERMEDFTDSAYTSHEHRERILELSTQARMELQQLISVWIQAQSKKTKSIAEELELSILKISHSLNELKKELHSTATQLAADLLKYHADHVVLKALKLTGVEGNLEALAEYACKLSEQKEQLVETCRLLRHISGTEPLEITCIHAEETFQVTGQQIISAAETLTLHPSSKIAKENLDVFCEAWESQISDMSTLLREINDVFEGRRGEKYGYLSLPKPMKNNANLKSLKPDKPDSEEQAKIAKLGLKLGLLTSDADCEIEKWEDQENEIVQYGRNMSSMAYSLYLFTRGEGPLKTSQDLIHQLEVFAAEGLKLTSSVQAFSKQLKDDDKLMLLLEINKLIPLCHQLQTVTKTSLQNKVFLKVDKCITKTRSMMALLVQLLSLCYKLLKKLQMENNGWVSVTNKDTMDSKT</sequence>
<reference key="1">
    <citation type="journal article" date="1998" name="Genomics">
        <title>Identification and chromosomal localization of CTNNAL1, a novel protein homologous to alpha-catenin.</title>
        <authorList>
            <person name="Zhang J.-S."/>
            <person name="Nelson M."/>
            <person name="Wang L."/>
            <person name="Liu W."/>
            <person name="Qian C.-P."/>
            <person name="Shridhar V."/>
            <person name="Urrutia R."/>
            <person name="Smith D.I."/>
        </authorList>
    </citation>
    <scope>NUCLEOTIDE SEQUENCE [MRNA] (ISOFORM 1)</scope>
    <scope>TISSUE SPECIFICITY</scope>
    <scope>INDUCTION</scope>
    <source>
        <tissue>Pancreatic cancer</tissue>
    </source>
</reference>
<reference key="2">
    <citation type="journal article" date="1999" name="Biochim. Biophys. Acta">
        <title>Human alpha-catulin, a novel alpha-catenin-like molecule with conserved genomic structure, but deviating alternative splicing.</title>
        <authorList>
            <person name="Janssens B."/>
            <person name="Staes K."/>
            <person name="van Roy F.M."/>
        </authorList>
    </citation>
    <scope>NUCLEOTIDE SEQUENCE [GENOMIC DNA / MRNA] (ISOFORMS 1 AND 2)</scope>
    <scope>TISSUE SPECIFICITY</scope>
</reference>
<reference key="3">
    <citation type="submission" date="1997-05" db="EMBL/GenBank/DDBJ databases">
        <authorList>
            <person name="Kishi M."/>
            <person name="Nagafuchi A."/>
            <person name="Tsukita S."/>
        </authorList>
    </citation>
    <scope>NUCLEOTIDE SEQUENCE [MRNA] (ISOFORM 1)</scope>
</reference>
<reference key="4">
    <citation type="submission" date="1998-07" db="EMBL/GenBank/DDBJ databases">
        <title>Isolation of a novel alpha-catenin-like gene from the familial dysautonomia candidate region on 9q31.</title>
        <authorList>
            <person name="Slaugenhaupt S.A."/>
            <person name="Liebert C.B."/>
            <person name="Leyne M."/>
            <person name="Mull J."/>
            <person name="Gill S."/>
            <person name="Chadwick B.P."/>
            <person name="Maayan C."/>
            <person name="Axelrod F.B."/>
            <person name="Blumenfeld A."/>
            <person name="Gusella J.F."/>
        </authorList>
    </citation>
    <scope>NUCLEOTIDE SEQUENCE [MRNA] (ISOFORM 1)</scope>
</reference>
<reference key="5">
    <citation type="submission" date="2005-04" db="EMBL/GenBank/DDBJ databases">
        <authorList>
            <person name="Suzuki Y."/>
            <person name="Sugano S."/>
            <person name="Totoki Y."/>
            <person name="Toyoda A."/>
            <person name="Takeda T."/>
            <person name="Sakaki Y."/>
            <person name="Tanaka A."/>
            <person name="Yokoyama S."/>
        </authorList>
    </citation>
    <scope>NUCLEOTIDE SEQUENCE [LARGE SCALE MRNA] (ISOFORM 1)</scope>
    <source>
        <tissue>Gastric mucosa</tissue>
    </source>
</reference>
<reference key="6">
    <citation type="submission" date="2004-01" db="EMBL/GenBank/DDBJ databases">
        <authorList>
            <consortium name="NIEHS SNPs program"/>
        </authorList>
    </citation>
    <scope>NUCLEOTIDE SEQUENCE [GENOMIC DNA]</scope>
    <scope>VARIANTS THR-91; LYS-203; GLN-527; ASN-593 AND ARG-716</scope>
</reference>
<reference key="7">
    <citation type="journal article" date="2008" name="Nat. Methods">
        <title>Human protein factory for converting the transcriptome into an in vitro-expressed proteome.</title>
        <authorList>
            <person name="Goshima N."/>
            <person name="Kawamura Y."/>
            <person name="Fukumoto A."/>
            <person name="Miura A."/>
            <person name="Honma R."/>
            <person name="Satoh R."/>
            <person name="Wakamatsu A."/>
            <person name="Yamamoto J."/>
            <person name="Kimura K."/>
            <person name="Nishikawa T."/>
            <person name="Andoh T."/>
            <person name="Iida Y."/>
            <person name="Ishikawa K."/>
            <person name="Ito E."/>
            <person name="Kagawa N."/>
            <person name="Kaminaga C."/>
            <person name="Kanehori K."/>
            <person name="Kawakami B."/>
            <person name="Kenmochi K."/>
            <person name="Kimura R."/>
            <person name="Kobayashi M."/>
            <person name="Kuroita T."/>
            <person name="Kuwayama H."/>
            <person name="Maruyama Y."/>
            <person name="Matsuo K."/>
            <person name="Minami K."/>
            <person name="Mitsubori M."/>
            <person name="Mori M."/>
            <person name="Morishita R."/>
            <person name="Murase A."/>
            <person name="Nishikawa A."/>
            <person name="Nishikawa S."/>
            <person name="Okamoto T."/>
            <person name="Sakagami N."/>
            <person name="Sakamoto Y."/>
            <person name="Sasaki Y."/>
            <person name="Seki T."/>
            <person name="Sono S."/>
            <person name="Sugiyama A."/>
            <person name="Sumiya T."/>
            <person name="Takayama T."/>
            <person name="Takayama Y."/>
            <person name="Takeda H."/>
            <person name="Togashi T."/>
            <person name="Yahata K."/>
            <person name="Yamada H."/>
            <person name="Yanagisawa Y."/>
            <person name="Endo Y."/>
            <person name="Imamoto F."/>
            <person name="Kisu Y."/>
            <person name="Tanaka S."/>
            <person name="Isogai T."/>
            <person name="Imai J."/>
            <person name="Watanabe S."/>
            <person name="Nomura N."/>
        </authorList>
    </citation>
    <scope>NUCLEOTIDE SEQUENCE [LARGE SCALE MRNA] (ISOFORM 1)</scope>
</reference>
<reference key="8">
    <citation type="journal article" date="2004" name="Nature">
        <title>DNA sequence and analysis of human chromosome 9.</title>
        <authorList>
            <person name="Humphray S.J."/>
            <person name="Oliver K."/>
            <person name="Hunt A.R."/>
            <person name="Plumb R.W."/>
            <person name="Loveland J.E."/>
            <person name="Howe K.L."/>
            <person name="Andrews T.D."/>
            <person name="Searle S."/>
            <person name="Hunt S.E."/>
            <person name="Scott C.E."/>
            <person name="Jones M.C."/>
            <person name="Ainscough R."/>
            <person name="Almeida J.P."/>
            <person name="Ambrose K.D."/>
            <person name="Ashwell R.I.S."/>
            <person name="Babbage A.K."/>
            <person name="Babbage S."/>
            <person name="Bagguley C.L."/>
            <person name="Bailey J."/>
            <person name="Banerjee R."/>
            <person name="Barker D.J."/>
            <person name="Barlow K.F."/>
            <person name="Bates K."/>
            <person name="Beasley H."/>
            <person name="Beasley O."/>
            <person name="Bird C.P."/>
            <person name="Bray-Allen S."/>
            <person name="Brown A.J."/>
            <person name="Brown J.Y."/>
            <person name="Burford D."/>
            <person name="Burrill W."/>
            <person name="Burton J."/>
            <person name="Carder C."/>
            <person name="Carter N.P."/>
            <person name="Chapman J.C."/>
            <person name="Chen Y."/>
            <person name="Clarke G."/>
            <person name="Clark S.Y."/>
            <person name="Clee C.M."/>
            <person name="Clegg S."/>
            <person name="Collier R.E."/>
            <person name="Corby N."/>
            <person name="Crosier M."/>
            <person name="Cummings A.T."/>
            <person name="Davies J."/>
            <person name="Dhami P."/>
            <person name="Dunn M."/>
            <person name="Dutta I."/>
            <person name="Dyer L.W."/>
            <person name="Earthrowl M.E."/>
            <person name="Faulkner L."/>
            <person name="Fleming C.J."/>
            <person name="Frankish A."/>
            <person name="Frankland J.A."/>
            <person name="French L."/>
            <person name="Fricker D.G."/>
            <person name="Garner P."/>
            <person name="Garnett J."/>
            <person name="Ghori J."/>
            <person name="Gilbert J.G.R."/>
            <person name="Glison C."/>
            <person name="Grafham D.V."/>
            <person name="Gribble S."/>
            <person name="Griffiths C."/>
            <person name="Griffiths-Jones S."/>
            <person name="Grocock R."/>
            <person name="Guy J."/>
            <person name="Hall R.E."/>
            <person name="Hammond S."/>
            <person name="Harley J.L."/>
            <person name="Harrison E.S.I."/>
            <person name="Hart E.A."/>
            <person name="Heath P.D."/>
            <person name="Henderson C.D."/>
            <person name="Hopkins B.L."/>
            <person name="Howard P.J."/>
            <person name="Howden P.J."/>
            <person name="Huckle E."/>
            <person name="Johnson C."/>
            <person name="Johnson D."/>
            <person name="Joy A.A."/>
            <person name="Kay M."/>
            <person name="Keenan S."/>
            <person name="Kershaw J.K."/>
            <person name="Kimberley A.M."/>
            <person name="King A."/>
            <person name="Knights A."/>
            <person name="Laird G.K."/>
            <person name="Langford C."/>
            <person name="Lawlor S."/>
            <person name="Leongamornlert D.A."/>
            <person name="Leversha M."/>
            <person name="Lloyd C."/>
            <person name="Lloyd D.M."/>
            <person name="Lovell J."/>
            <person name="Martin S."/>
            <person name="Mashreghi-Mohammadi M."/>
            <person name="Matthews L."/>
            <person name="McLaren S."/>
            <person name="McLay K.E."/>
            <person name="McMurray A."/>
            <person name="Milne S."/>
            <person name="Nickerson T."/>
            <person name="Nisbett J."/>
            <person name="Nordsiek G."/>
            <person name="Pearce A.V."/>
            <person name="Peck A.I."/>
            <person name="Porter K.M."/>
            <person name="Pandian R."/>
            <person name="Pelan S."/>
            <person name="Phillimore B."/>
            <person name="Povey S."/>
            <person name="Ramsey Y."/>
            <person name="Rand V."/>
            <person name="Scharfe M."/>
            <person name="Sehra H.K."/>
            <person name="Shownkeen R."/>
            <person name="Sims S.K."/>
            <person name="Skuce C.D."/>
            <person name="Smith M."/>
            <person name="Steward C.A."/>
            <person name="Swarbreck D."/>
            <person name="Sycamore N."/>
            <person name="Tester J."/>
            <person name="Thorpe A."/>
            <person name="Tracey A."/>
            <person name="Tromans A."/>
            <person name="Thomas D.W."/>
            <person name="Wall M."/>
            <person name="Wallis J.M."/>
            <person name="West A.P."/>
            <person name="Whitehead S.L."/>
            <person name="Willey D.L."/>
            <person name="Williams S.A."/>
            <person name="Wilming L."/>
            <person name="Wray P.W."/>
            <person name="Young L."/>
            <person name="Ashurst J.L."/>
            <person name="Coulson A."/>
            <person name="Blocker H."/>
            <person name="Durbin R.M."/>
            <person name="Sulston J.E."/>
            <person name="Hubbard T."/>
            <person name="Jackson M.J."/>
            <person name="Bentley D.R."/>
            <person name="Beck S."/>
            <person name="Rogers J."/>
            <person name="Dunham I."/>
        </authorList>
    </citation>
    <scope>NUCLEOTIDE SEQUENCE [LARGE SCALE GENOMIC DNA]</scope>
</reference>
<reference key="9">
    <citation type="submission" date="2005-07" db="EMBL/GenBank/DDBJ databases">
        <authorList>
            <person name="Mural R.J."/>
            <person name="Istrail S."/>
            <person name="Sutton G.G."/>
            <person name="Florea L."/>
            <person name="Halpern A.L."/>
            <person name="Mobarry C.M."/>
            <person name="Lippert R."/>
            <person name="Walenz B."/>
            <person name="Shatkay H."/>
            <person name="Dew I."/>
            <person name="Miller J.R."/>
            <person name="Flanigan M.J."/>
            <person name="Edwards N.J."/>
            <person name="Bolanos R."/>
            <person name="Fasulo D."/>
            <person name="Halldorsson B.V."/>
            <person name="Hannenhalli S."/>
            <person name="Turner R."/>
            <person name="Yooseph S."/>
            <person name="Lu F."/>
            <person name="Nusskern D.R."/>
            <person name="Shue B.C."/>
            <person name="Zheng X.H."/>
            <person name="Zhong F."/>
            <person name="Delcher A.L."/>
            <person name="Huson D.H."/>
            <person name="Kravitz S.A."/>
            <person name="Mouchard L."/>
            <person name="Reinert K."/>
            <person name="Remington K.A."/>
            <person name="Clark A.G."/>
            <person name="Waterman M.S."/>
            <person name="Eichler E.E."/>
            <person name="Adams M.D."/>
            <person name="Hunkapiller M.W."/>
            <person name="Myers E.W."/>
            <person name="Venter J.C."/>
        </authorList>
    </citation>
    <scope>NUCLEOTIDE SEQUENCE [LARGE SCALE GENOMIC DNA]</scope>
</reference>
<reference key="10">
    <citation type="journal article" date="2004" name="Genome Res.">
        <title>The status, quality, and expansion of the NIH full-length cDNA project: the Mammalian Gene Collection (MGC).</title>
        <authorList>
            <consortium name="The MGC Project Team"/>
        </authorList>
    </citation>
    <scope>NUCLEOTIDE SEQUENCE [LARGE SCALE MRNA] (ISOFORM 1)</scope>
    <source>
        <tissue>Brain</tissue>
    </source>
</reference>
<reference key="11">
    <citation type="journal article" date="2007" name="BMC Genomics">
        <title>The full-ORF clone resource of the German cDNA consortium.</title>
        <authorList>
            <person name="Bechtel S."/>
            <person name="Rosenfelder H."/>
            <person name="Duda A."/>
            <person name="Schmidt C.P."/>
            <person name="Ernst U."/>
            <person name="Wellenreuther R."/>
            <person name="Mehrle A."/>
            <person name="Schuster C."/>
            <person name="Bahr A."/>
            <person name="Bloecker H."/>
            <person name="Heubner D."/>
            <person name="Hoerlein A."/>
            <person name="Michel G."/>
            <person name="Wedler H."/>
            <person name="Koehrer K."/>
            <person name="Ottenwaelder B."/>
            <person name="Poustka A."/>
            <person name="Wiemann S."/>
            <person name="Schupp I."/>
        </authorList>
    </citation>
    <scope>NUCLEOTIDE SEQUENCE [LARGE SCALE MRNA] OF 296-734 (ISOFORM 3)</scope>
    <source>
        <tissue>Brain</tissue>
    </source>
</reference>
<reference key="12">
    <citation type="journal article" date="2002" name="J. Biol. Chem.">
        <title>Association of Lbc Rho guanine nucleotide exchange factor with alpha-catenin-related protein, alpha-catulin/CTNNAL1, supports serum response factor activation.</title>
        <authorList>
            <person name="Park B."/>
            <person name="Nguyen N.T."/>
            <person name="Dutt P."/>
            <person name="Merdek K.D."/>
            <person name="Bashar M."/>
            <person name="Sterpetti P."/>
            <person name="Tosolini A."/>
            <person name="Testa J.R."/>
            <person name="Toksoz D."/>
        </authorList>
    </citation>
    <scope>TISSUE SPECIFICITY</scope>
    <scope>SUBCELLULAR LOCATION</scope>
    <scope>INTERACTION WITH ARHGEF1</scope>
</reference>
<reference key="13">
    <citation type="journal article" date="2008" name="Proc. Natl. Acad. Sci. U.S.A.">
        <title>A quantitative atlas of mitotic phosphorylation.</title>
        <authorList>
            <person name="Dephoure N."/>
            <person name="Zhou C."/>
            <person name="Villen J."/>
            <person name="Beausoleil S.A."/>
            <person name="Bakalarski C.E."/>
            <person name="Elledge S.J."/>
            <person name="Gygi S.P."/>
        </authorList>
    </citation>
    <scope>PHOSPHORYLATION [LARGE SCALE ANALYSIS] AT SER-538</scope>
    <scope>IDENTIFICATION BY MASS SPECTROMETRY [LARGE SCALE ANALYSIS]</scope>
    <source>
        <tissue>Cervix carcinoma</tissue>
    </source>
</reference>
<reference evidence="9" key="14">
    <citation type="journal article" date="2012" name="J. Biol. Chem.">
        <title>Interaction of alpha-catulin with dystrobrevin contributes to integrity of dystrophin complex in muscle.</title>
        <authorList>
            <person name="Oh H.J."/>
            <person name="Abraham L.S."/>
            <person name="van Hengel J."/>
            <person name="Stove C."/>
            <person name="Proszynski T.J."/>
            <person name="Gevaert K."/>
            <person name="DiMario J.X."/>
            <person name="Sanes J.R."/>
            <person name="van Roy F."/>
            <person name="Kim H."/>
        </authorList>
    </citation>
    <scope>INTERACTION WITH DTNA</scope>
</reference>
<reference key="15">
    <citation type="journal article" date="2013" name="J. Proteome Res.">
        <title>Toward a comprehensive characterization of a human cancer cell phosphoproteome.</title>
        <authorList>
            <person name="Zhou H."/>
            <person name="Di Palma S."/>
            <person name="Preisinger C."/>
            <person name="Peng M."/>
            <person name="Polat A.N."/>
            <person name="Heck A.J."/>
            <person name="Mohammed S."/>
        </authorList>
    </citation>
    <scope>PHOSPHORYLATION [LARGE SCALE ANALYSIS] AT SER-538</scope>
    <scope>IDENTIFICATION BY MASS SPECTROMETRY [LARGE SCALE ANALYSIS]</scope>
    <source>
        <tissue>Cervix carcinoma</tissue>
    </source>
</reference>
<comment type="function">
    <text>May modulate the Rho pathway signaling by providing a scaffold for the Lbc Rho guanine nucleotide exchange factor (ARHGEF1).</text>
</comment>
<comment type="subunit">
    <text evidence="1 3 4">Interacts with ARHGEF1 (PubMed:12270917). Interacts with DTNA (PubMed:22577143). The interaction is required for correct localization of both CTNL1 and DTNA (By similarity).</text>
</comment>
<comment type="interaction">
    <interactant intactId="EBI-514206">
        <id>Q9UBT7</id>
    </interactant>
    <interactant intactId="EBI-741210">
        <id>Q0VDD7</id>
        <label>BRME1</label>
    </interactant>
    <organismsDiffer>false</organismsDiffer>
    <experiments>3</experiments>
</comment>
<comment type="interaction">
    <interactant intactId="EBI-514206">
        <id>Q9UBT7</id>
    </interactant>
    <interactant intactId="EBI-741724">
        <id>Q8NA61</id>
        <label>CBY2</label>
    </interactant>
    <organismsDiffer>false</organismsDiffer>
    <experiments>4</experiments>
</comment>
<comment type="interaction">
    <interactant intactId="EBI-514206">
        <id>Q9UBT7</id>
    </interactant>
    <interactant intactId="EBI-295827">
        <id>P11532</id>
        <label>DMD</label>
    </interactant>
    <organismsDiffer>false</organismsDiffer>
    <experiments>10</experiments>
</comment>
<comment type="interaction">
    <interactant intactId="EBI-514206">
        <id>Q9UBT7</id>
    </interactant>
    <interactant intactId="EBI-949471">
        <id>Q9Y4J8</id>
        <label>DTNA</label>
    </interactant>
    <organismsDiffer>false</organismsDiffer>
    <experiments>5</experiments>
</comment>
<comment type="interaction">
    <interactant intactId="EBI-514206">
        <id>Q9UBT7</id>
    </interactant>
    <interactant intactId="EBI-740402">
        <id>O60941</id>
        <label>DTNB</label>
    </interactant>
    <organismsDiffer>false</organismsDiffer>
    <experiments>2</experiments>
</comment>
<comment type="interaction">
    <interactant intactId="EBI-514206">
        <id>Q9UBT7</id>
    </interactant>
    <interactant intactId="EBI-968381">
        <id>Q00722</id>
        <label>PLCB2</label>
    </interactant>
    <organismsDiffer>false</organismsDiffer>
    <experiments>3</experiments>
</comment>
<comment type="interaction">
    <interactant intactId="EBI-514206">
        <id>Q9UBT7</id>
    </interactant>
    <interactant intactId="EBI-9916363">
        <id>Q8IUD6</id>
        <label>RNF135</label>
    </interactant>
    <organismsDiffer>false</organismsDiffer>
    <experiments>7</experiments>
</comment>
<comment type="interaction">
    <interactant intactId="EBI-514206">
        <id>Q9UBT7</id>
    </interactant>
    <interactant intactId="EBI-748621">
        <id>Q9UJW9</id>
        <label>SERTAD3</label>
    </interactant>
    <organismsDiffer>false</organismsDiffer>
    <experiments>3</experiments>
</comment>
<comment type="interaction">
    <interactant intactId="EBI-514206">
        <id>Q9UBT7</id>
    </interactant>
    <interactant intactId="EBI-2813981">
        <id>Q9C029</id>
        <label>TRIM7</label>
    </interactant>
    <organismsDiffer>false</organismsDiffer>
    <experiments>3</experiments>
</comment>
<comment type="interaction">
    <interactant intactId="EBI-514206">
        <id>Q9UBT7</id>
    </interactant>
    <interactant intactId="EBI-739485">
        <id>Q9Y3Q8</id>
        <label>TSC22D4</label>
    </interactant>
    <organismsDiffer>false</organismsDiffer>
    <experiments>3</experiments>
</comment>
<comment type="interaction">
    <interactant intactId="EBI-514206">
        <id>Q9UBT7</id>
    </interactant>
    <interactant intactId="EBI-954308">
        <id>Q9Y6N9</id>
        <label>USH1C</label>
    </interactant>
    <organismsDiffer>false</organismsDiffer>
    <experiments>3</experiments>
</comment>
<comment type="interaction">
    <interactant intactId="EBI-514206">
        <id>Q9UBT7</id>
    </interactant>
    <interactant intactId="EBI-740037">
        <id>O96006</id>
        <label>ZBED1</label>
    </interactant>
    <organismsDiffer>false</organismsDiffer>
    <experiments>3</experiments>
</comment>
<comment type="subcellular location">
    <subcellularLocation>
        <location evidence="3">Cytoplasm</location>
        <location evidence="3">Cytoskeleton</location>
    </subcellularLocation>
    <subcellularLocation>
        <location evidence="3">Cell membrane</location>
        <topology evidence="3">Peripheral membrane protein</topology>
    </subcellularLocation>
</comment>
<comment type="alternative products">
    <event type="alternative splicing"/>
    <isoform>
        <id>Q9UBT7-1</id>
        <name>1</name>
        <sequence type="displayed"/>
    </isoform>
    <isoform>
        <id>Q9UBT7-2</id>
        <name>2</name>
        <name>Alpha2-catulin</name>
        <sequence type="described" ref="VSP_012583"/>
    </isoform>
    <isoform>
        <id>Q9UBT7-3</id>
        <name>3</name>
        <sequence type="described" ref="VSP_012582"/>
    </isoform>
</comment>
<comment type="tissue specificity">
    <text evidence="2 3 5">Widely expressed. Expressed at lower level in neural tissues and at the highest level in the adrenal gland.</text>
</comment>
<comment type="induction">
    <text evidence="5">Down-regulated in cancer pancreatic cells undergoing differentiation and apoptosis.</text>
</comment>
<comment type="similarity">
    <text evidence="9">Belongs to the vinculin/alpha-catenin family.</text>
</comment>
<accession>Q9UBT7</accession>
<accession>B5BU47</accession>
<accession>O76084</accession>
<accession>Q53FQ2</accession>
<accession>Q5JTQ7</accession>
<accession>Q5JTQ8</accession>
<accession>Q9Y401</accession>
<feature type="chain" id="PRO_0000064268" description="Alpha-catulin">
    <location>
        <begin position="1"/>
        <end position="734"/>
    </location>
</feature>
<feature type="modified residue" description="Phosphoserine" evidence="1">
    <location>
        <position position="374"/>
    </location>
</feature>
<feature type="modified residue" description="Phosphoserine" evidence="10 11">
    <location>
        <position position="538"/>
    </location>
</feature>
<feature type="splice variant" id="VSP_012582" description="In isoform 3." evidence="8">
    <location>
        <begin position="397"/>
        <end position="480"/>
    </location>
</feature>
<feature type="splice variant" id="VSP_012583" description="In isoform 2." evidence="7">
    <original>LQMENNGWVSVTNKDTMDSKT</original>
    <variation>SETRY</variation>
    <location>
        <begin position="714"/>
        <end position="734"/>
    </location>
</feature>
<feature type="sequence variant" id="VAR_020924" description="In dbSNP:rs28361109." evidence="6">
    <original>N</original>
    <variation>T</variation>
    <location>
        <position position="91"/>
    </location>
</feature>
<feature type="sequence variant" id="VAR_020925" description="In dbSNP:rs28361118." evidence="6">
    <original>E</original>
    <variation>K</variation>
    <location>
        <position position="203"/>
    </location>
</feature>
<feature type="sequence variant" id="VAR_033845" description="In dbSNP:rs16913734.">
    <original>T</original>
    <variation>S</variation>
    <location>
        <position position="424"/>
    </location>
</feature>
<feature type="sequence variant" id="VAR_020926" description="In dbSNP:rs7021366." evidence="6">
    <original>E</original>
    <variation>Q</variation>
    <location>
        <position position="527"/>
    </location>
</feature>
<feature type="sequence variant" id="VAR_053370" description="In dbSNP:rs34922868.">
    <original>D</original>
    <variation>E</variation>
    <location>
        <position position="555"/>
    </location>
</feature>
<feature type="sequence variant" id="VAR_020927" description="In dbSNP:rs28361167." evidence="6">
    <original>I</original>
    <variation>N</variation>
    <location>
        <position position="593"/>
    </location>
</feature>
<feature type="sequence variant" id="VAR_020928" description="In dbSNP:rs28361182." evidence="6">
    <original>M</original>
    <variation>R</variation>
    <location>
        <position position="716"/>
    </location>
</feature>
<feature type="sequence conflict" description="In Ref. 5; BAD96950." evidence="9" ref="5">
    <original>F</original>
    <variation>S</variation>
    <location>
        <position position="504"/>
    </location>
</feature>
<name>CTNL1_HUMAN</name>
<dbReference type="EMBL" id="AF030233">
    <property type="protein sequence ID" value="AAC83460.1"/>
    <property type="molecule type" value="mRNA"/>
</dbReference>
<dbReference type="EMBL" id="U97067">
    <property type="protein sequence ID" value="AAC27693.1"/>
    <property type="molecule type" value="mRNA"/>
</dbReference>
<dbReference type="EMBL" id="AF134888">
    <property type="protein sequence ID" value="AAF07820.1"/>
    <property type="molecule type" value="Genomic_DNA"/>
</dbReference>
<dbReference type="EMBL" id="AF134871">
    <property type="protein sequence ID" value="AAF07820.1"/>
    <property type="status" value="JOINED"/>
    <property type="molecule type" value="Genomic_DNA"/>
</dbReference>
<dbReference type="EMBL" id="AF134873">
    <property type="protein sequence ID" value="AAF07820.1"/>
    <property type="status" value="JOINED"/>
    <property type="molecule type" value="Genomic_DNA"/>
</dbReference>
<dbReference type="EMBL" id="AF134874">
    <property type="protein sequence ID" value="AAF07820.1"/>
    <property type="status" value="JOINED"/>
    <property type="molecule type" value="Genomic_DNA"/>
</dbReference>
<dbReference type="EMBL" id="AF134872">
    <property type="protein sequence ID" value="AAF07820.1"/>
    <property type="status" value="JOINED"/>
    <property type="molecule type" value="Genomic_DNA"/>
</dbReference>
<dbReference type="EMBL" id="AF134875">
    <property type="protein sequence ID" value="AAF07820.1"/>
    <property type="status" value="JOINED"/>
    <property type="molecule type" value="Genomic_DNA"/>
</dbReference>
<dbReference type="EMBL" id="AF134877">
    <property type="protein sequence ID" value="AAF07820.1"/>
    <property type="status" value="JOINED"/>
    <property type="molecule type" value="Genomic_DNA"/>
</dbReference>
<dbReference type="EMBL" id="AF134879">
    <property type="protein sequence ID" value="AAF07820.1"/>
    <property type="status" value="JOINED"/>
    <property type="molecule type" value="Genomic_DNA"/>
</dbReference>
<dbReference type="EMBL" id="AF134881">
    <property type="protein sequence ID" value="AAF07820.1"/>
    <property type="status" value="JOINED"/>
    <property type="molecule type" value="Genomic_DNA"/>
</dbReference>
<dbReference type="EMBL" id="AF134887">
    <property type="protein sequence ID" value="AAF07820.1"/>
    <property type="status" value="JOINED"/>
    <property type="molecule type" value="Genomic_DNA"/>
</dbReference>
<dbReference type="EMBL" id="AF134886">
    <property type="protein sequence ID" value="AAF07820.1"/>
    <property type="status" value="JOINED"/>
    <property type="molecule type" value="Genomic_DNA"/>
</dbReference>
<dbReference type="EMBL" id="AF134885">
    <property type="protein sequence ID" value="AAF07820.1"/>
    <property type="status" value="JOINED"/>
    <property type="molecule type" value="Genomic_DNA"/>
</dbReference>
<dbReference type="EMBL" id="AF134884">
    <property type="protein sequence ID" value="AAF07820.1"/>
    <property type="status" value="JOINED"/>
    <property type="molecule type" value="Genomic_DNA"/>
</dbReference>
<dbReference type="EMBL" id="AF134883">
    <property type="protein sequence ID" value="AAF07820.1"/>
    <property type="status" value="JOINED"/>
    <property type="molecule type" value="Genomic_DNA"/>
</dbReference>
<dbReference type="EMBL" id="AF134882">
    <property type="protein sequence ID" value="AAF07820.1"/>
    <property type="status" value="JOINED"/>
    <property type="molecule type" value="Genomic_DNA"/>
</dbReference>
<dbReference type="EMBL" id="AF134880">
    <property type="protein sequence ID" value="AAF07820.1"/>
    <property type="status" value="JOINED"/>
    <property type="molecule type" value="Genomic_DNA"/>
</dbReference>
<dbReference type="EMBL" id="AF134878">
    <property type="protein sequence ID" value="AAF07820.1"/>
    <property type="status" value="JOINED"/>
    <property type="molecule type" value="Genomic_DNA"/>
</dbReference>
<dbReference type="EMBL" id="AF134876">
    <property type="protein sequence ID" value="AAF07820.1"/>
    <property type="status" value="JOINED"/>
    <property type="molecule type" value="Genomic_DNA"/>
</dbReference>
<dbReference type="EMBL" id="AF134888">
    <property type="protein sequence ID" value="AAF07821.1"/>
    <property type="molecule type" value="Genomic_DNA"/>
</dbReference>
<dbReference type="EMBL" id="AF134871">
    <property type="protein sequence ID" value="AAF07821.1"/>
    <property type="status" value="JOINED"/>
    <property type="molecule type" value="Genomic_DNA"/>
</dbReference>
<dbReference type="EMBL" id="AF134872">
    <property type="protein sequence ID" value="AAF07821.1"/>
    <property type="status" value="JOINED"/>
    <property type="molecule type" value="Genomic_DNA"/>
</dbReference>
<dbReference type="EMBL" id="AF134874">
    <property type="protein sequence ID" value="AAF07821.1"/>
    <property type="status" value="JOINED"/>
    <property type="molecule type" value="Genomic_DNA"/>
</dbReference>
<dbReference type="EMBL" id="AF134876">
    <property type="protein sequence ID" value="AAF07821.1"/>
    <property type="status" value="JOINED"/>
    <property type="molecule type" value="Genomic_DNA"/>
</dbReference>
<dbReference type="EMBL" id="AF134878">
    <property type="protein sequence ID" value="AAF07821.1"/>
    <property type="status" value="JOINED"/>
    <property type="molecule type" value="Genomic_DNA"/>
</dbReference>
<dbReference type="EMBL" id="AF134880">
    <property type="protein sequence ID" value="AAF07821.1"/>
    <property type="status" value="JOINED"/>
    <property type="molecule type" value="Genomic_DNA"/>
</dbReference>
<dbReference type="EMBL" id="AF134882">
    <property type="protein sequence ID" value="AAF07821.1"/>
    <property type="status" value="JOINED"/>
    <property type="molecule type" value="Genomic_DNA"/>
</dbReference>
<dbReference type="EMBL" id="AF134884">
    <property type="protein sequence ID" value="AAF07821.1"/>
    <property type="status" value="JOINED"/>
    <property type="molecule type" value="Genomic_DNA"/>
</dbReference>
<dbReference type="EMBL" id="AF134887">
    <property type="protein sequence ID" value="AAF07821.1"/>
    <property type="status" value="JOINED"/>
    <property type="molecule type" value="Genomic_DNA"/>
</dbReference>
<dbReference type="EMBL" id="AF134886">
    <property type="protein sequence ID" value="AAF07821.1"/>
    <property type="status" value="JOINED"/>
    <property type="molecule type" value="Genomic_DNA"/>
</dbReference>
<dbReference type="EMBL" id="AF134885">
    <property type="protein sequence ID" value="AAF07821.1"/>
    <property type="status" value="JOINED"/>
    <property type="molecule type" value="Genomic_DNA"/>
</dbReference>
<dbReference type="EMBL" id="AF134883">
    <property type="protein sequence ID" value="AAF07821.1"/>
    <property type="status" value="JOINED"/>
    <property type="molecule type" value="Genomic_DNA"/>
</dbReference>
<dbReference type="EMBL" id="AF134881">
    <property type="protein sequence ID" value="AAF07821.1"/>
    <property type="status" value="JOINED"/>
    <property type="molecule type" value="Genomic_DNA"/>
</dbReference>
<dbReference type="EMBL" id="AF134879">
    <property type="protein sequence ID" value="AAF07821.1"/>
    <property type="status" value="JOINED"/>
    <property type="molecule type" value="Genomic_DNA"/>
</dbReference>
<dbReference type="EMBL" id="AF134877">
    <property type="protein sequence ID" value="AAF07821.1"/>
    <property type="status" value="JOINED"/>
    <property type="molecule type" value="Genomic_DNA"/>
</dbReference>
<dbReference type="EMBL" id="AF134875">
    <property type="protein sequence ID" value="AAF07821.1"/>
    <property type="status" value="JOINED"/>
    <property type="molecule type" value="Genomic_DNA"/>
</dbReference>
<dbReference type="EMBL" id="AF134873">
    <property type="protein sequence ID" value="AAF07821.1"/>
    <property type="status" value="JOINED"/>
    <property type="molecule type" value="Genomic_DNA"/>
</dbReference>
<dbReference type="EMBL" id="AF135021">
    <property type="protein sequence ID" value="AAF07819.1"/>
    <property type="molecule type" value="mRNA"/>
</dbReference>
<dbReference type="EMBL" id="AF006070">
    <property type="protein sequence ID" value="AAC26011.1"/>
    <property type="molecule type" value="mRNA"/>
</dbReference>
<dbReference type="EMBL" id="AF080071">
    <property type="protein sequence ID" value="AAC69576.1"/>
    <property type="molecule type" value="mRNA"/>
</dbReference>
<dbReference type="EMBL" id="AK223230">
    <property type="protein sequence ID" value="BAD96950.1"/>
    <property type="molecule type" value="mRNA"/>
</dbReference>
<dbReference type="EMBL" id="AY523969">
    <property type="protein sequence ID" value="AAR92479.1"/>
    <property type="molecule type" value="Genomic_DNA"/>
</dbReference>
<dbReference type="EMBL" id="AB451283">
    <property type="protein sequence ID" value="BAG70097.1"/>
    <property type="molecule type" value="mRNA"/>
</dbReference>
<dbReference type="EMBL" id="AB451415">
    <property type="protein sequence ID" value="BAG70229.1"/>
    <property type="molecule type" value="mRNA"/>
</dbReference>
<dbReference type="EMBL" id="AL354797">
    <property type="status" value="NOT_ANNOTATED_CDS"/>
    <property type="molecule type" value="Genomic_DNA"/>
</dbReference>
<dbReference type="EMBL" id="CH471105">
    <property type="protein sequence ID" value="EAW59036.1"/>
    <property type="molecule type" value="Genomic_DNA"/>
</dbReference>
<dbReference type="EMBL" id="BC117208">
    <property type="protein sequence ID" value="AAI17209.1"/>
    <property type="molecule type" value="mRNA"/>
</dbReference>
<dbReference type="EMBL" id="BC117234">
    <property type="protein sequence ID" value="AAI17235.1"/>
    <property type="molecule type" value="mRNA"/>
</dbReference>
<dbReference type="EMBL" id="AL050016">
    <property type="protein sequence ID" value="CAB43238.1"/>
    <property type="molecule type" value="mRNA"/>
</dbReference>
<dbReference type="CCDS" id="CCDS6775.1">
    <molecule id="Q9UBT7-1"/>
</dbReference>
<dbReference type="CCDS" id="CCDS69638.1">
    <molecule id="Q9UBT7-2"/>
</dbReference>
<dbReference type="PIR" id="T08703">
    <property type="entry name" value="T08703"/>
</dbReference>
<dbReference type="RefSeq" id="NP_001273903.1">
    <molecule id="Q9UBT7-2"/>
    <property type="nucleotide sequence ID" value="NM_001286974.2"/>
</dbReference>
<dbReference type="RefSeq" id="NP_003789.1">
    <molecule id="Q9UBT7-1"/>
    <property type="nucleotide sequence ID" value="NM_003798.4"/>
</dbReference>
<dbReference type="SMR" id="Q9UBT7"/>
<dbReference type="BioGRID" id="114266">
    <property type="interactions" value="68"/>
</dbReference>
<dbReference type="CORUM" id="Q9UBT7"/>
<dbReference type="DIP" id="DIP-33236N"/>
<dbReference type="FunCoup" id="Q9UBT7">
    <property type="interactions" value="1062"/>
</dbReference>
<dbReference type="IntAct" id="Q9UBT7">
    <property type="interactions" value="50"/>
</dbReference>
<dbReference type="MINT" id="Q9UBT7"/>
<dbReference type="STRING" id="9606.ENSP00000320434"/>
<dbReference type="GlyGen" id="Q9UBT7">
    <property type="glycosylation" value="2 sites, 1 O-linked glycan (2 sites)"/>
</dbReference>
<dbReference type="iPTMnet" id="Q9UBT7"/>
<dbReference type="PhosphoSitePlus" id="Q9UBT7"/>
<dbReference type="BioMuta" id="CTNNAL1"/>
<dbReference type="DMDM" id="62901512"/>
<dbReference type="jPOST" id="Q9UBT7"/>
<dbReference type="MassIVE" id="Q9UBT7"/>
<dbReference type="PaxDb" id="9606-ENSP00000320434"/>
<dbReference type="PeptideAtlas" id="Q9UBT7"/>
<dbReference type="ProteomicsDB" id="84061">
    <molecule id="Q9UBT7-1"/>
</dbReference>
<dbReference type="ProteomicsDB" id="84062">
    <molecule id="Q9UBT7-2"/>
</dbReference>
<dbReference type="ProteomicsDB" id="84063">
    <molecule id="Q9UBT7-3"/>
</dbReference>
<dbReference type="Pumba" id="Q9UBT7"/>
<dbReference type="Antibodypedia" id="14981">
    <property type="antibodies" value="146 antibodies from 27 providers"/>
</dbReference>
<dbReference type="DNASU" id="8727"/>
<dbReference type="Ensembl" id="ENST00000325551.9">
    <molecule id="Q9UBT7-1"/>
    <property type="protein sequence ID" value="ENSP00000320434.4"/>
    <property type="gene ID" value="ENSG00000119326.15"/>
</dbReference>
<dbReference type="Ensembl" id="ENST00000374595.8">
    <molecule id="Q9UBT7-2"/>
    <property type="protein sequence ID" value="ENSP00000363723.4"/>
    <property type="gene ID" value="ENSG00000119326.15"/>
</dbReference>
<dbReference type="GeneID" id="8727"/>
<dbReference type="KEGG" id="hsa:8727"/>
<dbReference type="MANE-Select" id="ENST00000325551.9">
    <property type="protein sequence ID" value="ENSP00000320434.4"/>
    <property type="RefSeq nucleotide sequence ID" value="NM_003798.4"/>
    <property type="RefSeq protein sequence ID" value="NP_003789.1"/>
</dbReference>
<dbReference type="UCSC" id="uc004bdo.3">
    <molecule id="Q9UBT7-1"/>
    <property type="organism name" value="human"/>
</dbReference>
<dbReference type="AGR" id="HGNC:2512"/>
<dbReference type="CTD" id="8727"/>
<dbReference type="DisGeNET" id="8727"/>
<dbReference type="GeneCards" id="CTNNAL1"/>
<dbReference type="HGNC" id="HGNC:2512">
    <property type="gene designation" value="CTNNAL1"/>
</dbReference>
<dbReference type="HPA" id="ENSG00000119326">
    <property type="expression patterns" value="Tissue enhanced (adrenal)"/>
</dbReference>
<dbReference type="MIM" id="604785">
    <property type="type" value="gene"/>
</dbReference>
<dbReference type="neXtProt" id="NX_Q9UBT7"/>
<dbReference type="OpenTargets" id="ENSG00000119326"/>
<dbReference type="PharmGKB" id="PA27011"/>
<dbReference type="VEuPathDB" id="HostDB:ENSG00000119326"/>
<dbReference type="eggNOG" id="KOG3681">
    <property type="taxonomic scope" value="Eukaryota"/>
</dbReference>
<dbReference type="GeneTree" id="ENSGT01030000234543"/>
<dbReference type="HOGENOM" id="CLU_015314_4_0_1"/>
<dbReference type="InParanoid" id="Q9UBT7"/>
<dbReference type="OMA" id="DQQKMAK"/>
<dbReference type="OrthoDB" id="9933814at2759"/>
<dbReference type="PAN-GO" id="Q9UBT7">
    <property type="GO annotations" value="1 GO annotation based on evolutionary models"/>
</dbReference>
<dbReference type="PhylomeDB" id="Q9UBT7"/>
<dbReference type="TreeFam" id="TF313686"/>
<dbReference type="PathwayCommons" id="Q9UBT7"/>
<dbReference type="SignaLink" id="Q9UBT7"/>
<dbReference type="BioGRID-ORCS" id="8727">
    <property type="hits" value="12 hits in 1163 CRISPR screens"/>
</dbReference>
<dbReference type="ChiTaRS" id="CTNNAL1">
    <property type="organism name" value="human"/>
</dbReference>
<dbReference type="GeneWiki" id="CTNNAL1"/>
<dbReference type="GenomeRNAi" id="8727"/>
<dbReference type="Pharos" id="Q9UBT7">
    <property type="development level" value="Tbio"/>
</dbReference>
<dbReference type="PRO" id="PR:Q9UBT7"/>
<dbReference type="Proteomes" id="UP000005640">
    <property type="component" value="Chromosome 9"/>
</dbReference>
<dbReference type="RNAct" id="Q9UBT7">
    <property type="molecule type" value="protein"/>
</dbReference>
<dbReference type="Bgee" id="ENSG00000119326">
    <property type="expression patterns" value="Expressed in right adrenal gland cortex and 208 other cell types or tissues"/>
</dbReference>
<dbReference type="ExpressionAtlas" id="Q9UBT7">
    <property type="expression patterns" value="baseline and differential"/>
</dbReference>
<dbReference type="GO" id="GO:0005856">
    <property type="term" value="C:cytoskeleton"/>
    <property type="evidence" value="ECO:0007669"/>
    <property type="project" value="UniProtKB-SubCell"/>
</dbReference>
<dbReference type="GO" id="GO:0005829">
    <property type="term" value="C:cytosol"/>
    <property type="evidence" value="ECO:0000314"/>
    <property type="project" value="MGI"/>
</dbReference>
<dbReference type="GO" id="GO:0005886">
    <property type="term" value="C:plasma membrane"/>
    <property type="evidence" value="ECO:0007669"/>
    <property type="project" value="UniProtKB-SubCell"/>
</dbReference>
<dbReference type="GO" id="GO:0051015">
    <property type="term" value="F:actin filament binding"/>
    <property type="evidence" value="ECO:0007669"/>
    <property type="project" value="InterPro"/>
</dbReference>
<dbReference type="GO" id="GO:0045296">
    <property type="term" value="F:cadherin binding"/>
    <property type="evidence" value="ECO:0007669"/>
    <property type="project" value="InterPro"/>
</dbReference>
<dbReference type="GO" id="GO:0007155">
    <property type="term" value="P:cell adhesion"/>
    <property type="evidence" value="ECO:0007669"/>
    <property type="project" value="InterPro"/>
</dbReference>
<dbReference type="GO" id="GO:0007266">
    <property type="term" value="P:Rho protein signal transduction"/>
    <property type="evidence" value="ECO:0000314"/>
    <property type="project" value="MGI"/>
</dbReference>
<dbReference type="FunFam" id="1.20.120.230:FF:000014">
    <property type="entry name" value="Catenin alpha like 1"/>
    <property type="match status" value="1"/>
</dbReference>
<dbReference type="FunFam" id="1.20.120.230:FF:000016">
    <property type="entry name" value="Catenin alpha like 1"/>
    <property type="match status" value="1"/>
</dbReference>
<dbReference type="FunFam" id="1.20.120.230:FF:000017">
    <property type="entry name" value="Catenin alpha like 1"/>
    <property type="match status" value="1"/>
</dbReference>
<dbReference type="FunFam" id="1.20.120.230:FF:000022">
    <property type="entry name" value="Catenin alpha like 1"/>
    <property type="match status" value="1"/>
</dbReference>
<dbReference type="Gene3D" id="1.20.120.230">
    <property type="entry name" value="Alpha-catenin/vinculin-like"/>
    <property type="match status" value="4"/>
</dbReference>
<dbReference type="InterPro" id="IPR036723">
    <property type="entry name" value="Alpha-catenin/vinculin-like_sf"/>
</dbReference>
<dbReference type="InterPro" id="IPR001033">
    <property type="entry name" value="Alpha_catenin"/>
</dbReference>
<dbReference type="InterPro" id="IPR030045">
    <property type="entry name" value="CTNNAL1"/>
</dbReference>
<dbReference type="InterPro" id="IPR006077">
    <property type="entry name" value="Vinculin/catenin"/>
</dbReference>
<dbReference type="PANTHER" id="PTHR46342">
    <property type="entry name" value="ALPHA-CATULIN"/>
    <property type="match status" value="1"/>
</dbReference>
<dbReference type="PANTHER" id="PTHR46342:SF1">
    <property type="entry name" value="ALPHA-CATULIN"/>
    <property type="match status" value="1"/>
</dbReference>
<dbReference type="Pfam" id="PF01044">
    <property type="entry name" value="Vinculin"/>
    <property type="match status" value="2"/>
</dbReference>
<dbReference type="PRINTS" id="PR00805">
    <property type="entry name" value="ALPHACATENIN"/>
</dbReference>
<dbReference type="SUPFAM" id="SSF47220">
    <property type="entry name" value="alpha-catenin/vinculin-like"/>
    <property type="match status" value="3"/>
</dbReference>